<evidence type="ECO:0000250" key="1"/>
<evidence type="ECO:0000255" key="2"/>
<evidence type="ECO:0000255" key="3">
    <source>
        <dbReference type="PROSITE-ProRule" id="PRU00274"/>
    </source>
</evidence>
<evidence type="ECO:0000269" key="4">
    <source>
    </source>
</evidence>
<evidence type="ECO:0000305" key="5"/>
<accession>P29786</accession>
<accession>Q170R6</accession>
<accession>Q8MMK9</accession>
<accession>Q8T637</accession>
<proteinExistence type="evidence at transcript level"/>
<feature type="signal peptide" evidence="2">
    <location>
        <begin position="1"/>
        <end position="20"/>
    </location>
</feature>
<feature type="propeptide" id="PRO_0000028239" description="Activation peptide">
    <location>
        <begin position="21"/>
        <end position="27"/>
    </location>
</feature>
<feature type="chain" id="PRO_0000028240" description="Trypsin 3A1">
    <location>
        <begin position="28"/>
        <end position="254"/>
    </location>
</feature>
<feature type="domain" description="Peptidase S1" evidence="3">
    <location>
        <begin position="28"/>
        <end position="253"/>
    </location>
</feature>
<feature type="active site" description="Charge relay system" evidence="1">
    <location>
        <position position="68"/>
    </location>
</feature>
<feature type="active site" description="Charge relay system" evidence="1">
    <location>
        <position position="113"/>
    </location>
</feature>
<feature type="active site" description="Charge relay system" evidence="1">
    <location>
        <position position="209"/>
    </location>
</feature>
<feature type="site" description="Required for specificity" evidence="1">
    <location>
        <position position="203"/>
    </location>
</feature>
<feature type="disulfide bond" evidence="3">
    <location>
        <begin position="53"/>
        <end position="69"/>
    </location>
</feature>
<feature type="disulfide bond" evidence="3">
    <location>
        <begin position="178"/>
        <end position="194"/>
    </location>
</feature>
<feature type="disulfide bond" evidence="3">
    <location>
        <begin position="205"/>
        <end position="229"/>
    </location>
</feature>
<feature type="splice variant" id="VSP_035031" description="In isoform A." evidence="5">
    <location>
        <begin position="18"/>
        <end position="19"/>
    </location>
</feature>
<feature type="sequence conflict" description="In Ref. 3; CAA45714." evidence="5" ref="3">
    <original>GLSQ</original>
    <variation>DSAK</variation>
    <location>
        <begin position="14"/>
        <end position="17"/>
    </location>
</feature>
<feature type="sequence conflict" description="In Ref. 3; CAA45714." evidence="5" ref="3">
    <original>A</original>
    <variation>R</variation>
    <location>
        <position position="66"/>
    </location>
</feature>
<feature type="sequence conflict" description="In Ref. 3; CAA45714." evidence="5" ref="3">
    <original>E</original>
    <variation>D</variation>
    <location>
        <position position="136"/>
    </location>
</feature>
<feature type="sequence conflict" description="In Ref. 2; AAM34268." evidence="5" ref="2">
    <original>S</original>
    <variation>F</variation>
    <location>
        <position position="215"/>
    </location>
</feature>
<feature type="sequence conflict" description="In Ref. 2; AAM34268." evidence="5" ref="2">
    <original>K</original>
    <variation>E</variation>
    <location>
        <position position="218"/>
    </location>
</feature>
<protein>
    <recommendedName>
        <fullName>Trypsin 3A1</fullName>
        <ecNumber>3.4.21.4</ecNumber>
    </recommendedName>
</protein>
<dbReference type="EC" id="3.4.21.4"/>
<dbReference type="EMBL" id="AF487426">
    <property type="protein sequence ID" value="AAL93209.1"/>
    <property type="molecule type" value="mRNA"/>
</dbReference>
<dbReference type="EMBL" id="AF508783">
    <property type="protein sequence ID" value="AAM34268.1"/>
    <property type="molecule type" value="Transcribed_RNA"/>
</dbReference>
<dbReference type="EMBL" id="X64362">
    <property type="protein sequence ID" value="CAA45714.1"/>
    <property type="molecule type" value="mRNA"/>
</dbReference>
<dbReference type="EMBL" id="CH477469">
    <property type="protein sequence ID" value="EAT40452.1"/>
    <property type="molecule type" value="Genomic_DNA"/>
</dbReference>
<dbReference type="EMBL" id="CH477469">
    <property type="protein sequence ID" value="EAT40453.1"/>
    <property type="molecule type" value="Genomic_DNA"/>
</dbReference>
<dbReference type="PIR" id="S19890">
    <property type="entry name" value="TRWV3Y"/>
</dbReference>
<dbReference type="RefSeq" id="XP_001652943.1">
    <molecule id="P29786-1"/>
    <property type="nucleotide sequence ID" value="XM_001652893.1"/>
</dbReference>
<dbReference type="RefSeq" id="XP_001652944.1">
    <molecule id="P29786-2"/>
    <property type="nucleotide sequence ID" value="XM_001652894.1"/>
</dbReference>
<dbReference type="SMR" id="P29786"/>
<dbReference type="STRING" id="7159.P29786"/>
<dbReference type="MEROPS" id="S01.130"/>
<dbReference type="PaxDb" id="7159-AAEL007818-PB"/>
<dbReference type="EnsemblMetazoa" id="AAEL007818-RA">
    <molecule id="P29786-2"/>
    <property type="protein sequence ID" value="AAEL007818-PA"/>
    <property type="gene ID" value="AAEL007818"/>
</dbReference>
<dbReference type="EnsemblMetazoa" id="AAEL007818-RB">
    <molecule id="P29786-1"/>
    <property type="protein sequence ID" value="AAEL007818-PB"/>
    <property type="gene ID" value="AAEL007818"/>
</dbReference>
<dbReference type="GeneID" id="5569681"/>
<dbReference type="KEGG" id="aag:5569681"/>
<dbReference type="VEuPathDB" id="VectorBase:AAEL007818"/>
<dbReference type="eggNOG" id="KOG3627">
    <property type="taxonomic scope" value="Eukaryota"/>
</dbReference>
<dbReference type="InParanoid" id="P29786"/>
<dbReference type="OMA" id="GFQIDIA"/>
<dbReference type="OrthoDB" id="7756801at2759"/>
<dbReference type="PhylomeDB" id="P29786"/>
<dbReference type="BRENDA" id="3.4.21.4">
    <property type="organism ID" value="149"/>
</dbReference>
<dbReference type="Proteomes" id="UP000008820">
    <property type="component" value="Chromosome 2"/>
</dbReference>
<dbReference type="Proteomes" id="UP000682892">
    <property type="component" value="Chromosome 2"/>
</dbReference>
<dbReference type="GO" id="GO:0005576">
    <property type="term" value="C:extracellular region"/>
    <property type="evidence" value="ECO:0007669"/>
    <property type="project" value="UniProtKB-SubCell"/>
</dbReference>
<dbReference type="GO" id="GO:0004252">
    <property type="term" value="F:serine-type endopeptidase activity"/>
    <property type="evidence" value="ECO:0007669"/>
    <property type="project" value="UniProtKB-EC"/>
</dbReference>
<dbReference type="GO" id="GO:0007586">
    <property type="term" value="P:digestion"/>
    <property type="evidence" value="ECO:0007669"/>
    <property type="project" value="UniProtKB-KW"/>
</dbReference>
<dbReference type="GO" id="GO:0006508">
    <property type="term" value="P:proteolysis"/>
    <property type="evidence" value="ECO:0007669"/>
    <property type="project" value="UniProtKB-KW"/>
</dbReference>
<dbReference type="CDD" id="cd00190">
    <property type="entry name" value="Tryp_SPc"/>
    <property type="match status" value="1"/>
</dbReference>
<dbReference type="FunFam" id="2.40.10.10:FF:000077">
    <property type="entry name" value="Predicted protein"/>
    <property type="match status" value="1"/>
</dbReference>
<dbReference type="Gene3D" id="2.40.10.10">
    <property type="entry name" value="Trypsin-like serine proteases"/>
    <property type="match status" value="1"/>
</dbReference>
<dbReference type="InterPro" id="IPR050430">
    <property type="entry name" value="Peptidase_S1"/>
</dbReference>
<dbReference type="InterPro" id="IPR009003">
    <property type="entry name" value="Peptidase_S1_PA"/>
</dbReference>
<dbReference type="InterPro" id="IPR043504">
    <property type="entry name" value="Peptidase_S1_PA_chymotrypsin"/>
</dbReference>
<dbReference type="InterPro" id="IPR001314">
    <property type="entry name" value="Peptidase_S1A"/>
</dbReference>
<dbReference type="InterPro" id="IPR001254">
    <property type="entry name" value="Trypsin_dom"/>
</dbReference>
<dbReference type="InterPro" id="IPR018114">
    <property type="entry name" value="TRYPSIN_HIS"/>
</dbReference>
<dbReference type="InterPro" id="IPR033116">
    <property type="entry name" value="TRYPSIN_SER"/>
</dbReference>
<dbReference type="PANTHER" id="PTHR24276:SF97">
    <property type="entry name" value="GH13245P2-RELATED"/>
    <property type="match status" value="1"/>
</dbReference>
<dbReference type="PANTHER" id="PTHR24276">
    <property type="entry name" value="POLYSERASE-RELATED"/>
    <property type="match status" value="1"/>
</dbReference>
<dbReference type="Pfam" id="PF00089">
    <property type="entry name" value="Trypsin"/>
    <property type="match status" value="1"/>
</dbReference>
<dbReference type="PRINTS" id="PR00722">
    <property type="entry name" value="CHYMOTRYPSIN"/>
</dbReference>
<dbReference type="SMART" id="SM00020">
    <property type="entry name" value="Tryp_SPc"/>
    <property type="match status" value="1"/>
</dbReference>
<dbReference type="SUPFAM" id="SSF50494">
    <property type="entry name" value="Trypsin-like serine proteases"/>
    <property type="match status" value="1"/>
</dbReference>
<dbReference type="PROSITE" id="PS50240">
    <property type="entry name" value="TRYPSIN_DOM"/>
    <property type="match status" value="1"/>
</dbReference>
<dbReference type="PROSITE" id="PS00134">
    <property type="entry name" value="TRYPSIN_HIS"/>
    <property type="match status" value="1"/>
</dbReference>
<dbReference type="PROSITE" id="PS00135">
    <property type="entry name" value="TRYPSIN_SER"/>
    <property type="match status" value="1"/>
</dbReference>
<organism>
    <name type="scientific">Aedes aegypti</name>
    <name type="common">Yellowfever mosquito</name>
    <name type="synonym">Culex aegypti</name>
    <dbReference type="NCBI Taxonomy" id="7159"/>
    <lineage>
        <taxon>Eukaryota</taxon>
        <taxon>Metazoa</taxon>
        <taxon>Ecdysozoa</taxon>
        <taxon>Arthropoda</taxon>
        <taxon>Hexapoda</taxon>
        <taxon>Insecta</taxon>
        <taxon>Pterygota</taxon>
        <taxon>Neoptera</taxon>
        <taxon>Endopterygota</taxon>
        <taxon>Diptera</taxon>
        <taxon>Nematocera</taxon>
        <taxon>Culicoidea</taxon>
        <taxon>Culicidae</taxon>
        <taxon>Culicinae</taxon>
        <taxon>Aedini</taxon>
        <taxon>Aedes</taxon>
        <taxon>Stegomyia</taxon>
    </lineage>
</organism>
<reference key="1">
    <citation type="submission" date="2002-02" db="EMBL/GenBank/DDBJ databases">
        <title>Cloning and sequencing of early trypsin mRNA from Aedes aegypti 4th instar larval gut.</title>
        <authorList>
            <person name="Borovsky D."/>
            <person name="Matthys V.S."/>
        </authorList>
    </citation>
    <scope>NUCLEOTIDE SEQUENCE [MRNA] (ISOFORM B)</scope>
    <source>
        <tissue>Larval gut</tissue>
    </source>
</reference>
<reference key="2">
    <citation type="submission" date="2002-05" db="EMBL/GenBank/DDBJ databases">
        <title>Cloning, sequencing and characterization of Aedes aegypti early trypsin pre-mRNA.</title>
        <authorList>
            <person name="Borovsky D."/>
            <person name="Peeters T."/>
        </authorList>
    </citation>
    <scope>NUCLEOTIDE SEQUENCE (ISOFORM B)</scope>
    <source>
        <tissue>Gut</tissue>
    </source>
</reference>
<reference key="3">
    <citation type="journal article" date="1993" name="Insect Mol. Biol.">
        <title>Isolation, sequencing and characterization of two cDNA clones coding for trypsin-like enzymes from the midgut of Aedes aegypti.</title>
        <authorList>
            <person name="Kalhok S."/>
            <person name="Tabak L.M."/>
            <person name="Prosser D.E."/>
            <person name="Brook W."/>
            <person name="Downer A.E.R."/>
            <person name="White B.N."/>
        </authorList>
    </citation>
    <scope>NUCLEOTIDE SEQUENCE [MRNA] (ISOFORM B)</scope>
    <scope>FUNCTION</scope>
    <scope>SUBCELLULAR LOCATION</scope>
    <scope>TISSUE SPECIFICITY</scope>
    <scope>INDUCTION</scope>
    <source>
        <tissue>Midgut</tissue>
    </source>
</reference>
<reference key="4">
    <citation type="journal article" date="2007" name="Science">
        <title>Genome sequence of Aedes aegypti, a major arbovirus vector.</title>
        <authorList>
            <person name="Nene V."/>
            <person name="Wortman J.R."/>
            <person name="Lawson D."/>
            <person name="Haas B.J."/>
            <person name="Kodira C.D."/>
            <person name="Tu Z.J."/>
            <person name="Loftus B.J."/>
            <person name="Xi Z."/>
            <person name="Megy K."/>
            <person name="Grabherr M."/>
            <person name="Ren Q."/>
            <person name="Zdobnov E.M."/>
            <person name="Lobo N.F."/>
            <person name="Campbell K.S."/>
            <person name="Brown S.E."/>
            <person name="Bonaldo M.F."/>
            <person name="Zhu J."/>
            <person name="Sinkins S.P."/>
            <person name="Hogenkamp D.G."/>
            <person name="Amedeo P."/>
            <person name="Arensburger P."/>
            <person name="Atkinson P.W."/>
            <person name="Bidwell S.L."/>
            <person name="Biedler J."/>
            <person name="Birney E."/>
            <person name="Bruggner R.V."/>
            <person name="Costas J."/>
            <person name="Coy M.R."/>
            <person name="Crabtree J."/>
            <person name="Crawford M."/>
            <person name="DeBruyn B."/>
            <person name="DeCaprio D."/>
            <person name="Eiglmeier K."/>
            <person name="Eisenstadt E."/>
            <person name="El-Dorry H."/>
            <person name="Gelbart W.M."/>
            <person name="Gomes S.L."/>
            <person name="Hammond M."/>
            <person name="Hannick L.I."/>
            <person name="Hogan J.R."/>
            <person name="Holmes M.H."/>
            <person name="Jaffe D."/>
            <person name="Johnston S.J."/>
            <person name="Kennedy R.C."/>
            <person name="Koo H."/>
            <person name="Kravitz S."/>
            <person name="Kriventseva E.V."/>
            <person name="Kulp D."/>
            <person name="Labutti K."/>
            <person name="Lee E."/>
            <person name="Li S."/>
            <person name="Lovin D.D."/>
            <person name="Mao C."/>
            <person name="Mauceli E."/>
            <person name="Menck C.F."/>
            <person name="Miller J.R."/>
            <person name="Montgomery P."/>
            <person name="Mori A."/>
            <person name="Nascimento A.L."/>
            <person name="Naveira H.F."/>
            <person name="Nusbaum C."/>
            <person name="O'Leary S.B."/>
            <person name="Orvis J."/>
            <person name="Pertea M."/>
            <person name="Quesneville H."/>
            <person name="Reidenbach K.R."/>
            <person name="Rogers Y.-H.C."/>
            <person name="Roth C.W."/>
            <person name="Schneider J.R."/>
            <person name="Schatz M."/>
            <person name="Shumway M."/>
            <person name="Stanke M."/>
            <person name="Stinson E.O."/>
            <person name="Tubio J.M.C."/>
            <person name="Vanzee J.P."/>
            <person name="Verjovski-Almeida S."/>
            <person name="Werner D."/>
            <person name="White O.R."/>
            <person name="Wyder S."/>
            <person name="Zeng Q."/>
            <person name="Zhao Q."/>
            <person name="Zhao Y."/>
            <person name="Hill C.A."/>
            <person name="Raikhel A.S."/>
            <person name="Soares M.B."/>
            <person name="Knudson D.L."/>
            <person name="Lee N.H."/>
            <person name="Galagan J."/>
            <person name="Salzberg S.L."/>
            <person name="Paulsen I.T."/>
            <person name="Dimopoulos G."/>
            <person name="Collins F.H."/>
            <person name="Bruce B."/>
            <person name="Fraser-Liggett C.M."/>
            <person name="Severson D.W."/>
        </authorList>
    </citation>
    <scope>NUCLEOTIDE SEQUENCE [LARGE SCALE GENOMIC DNA]</scope>
    <scope>ALTERNATIVE SPLICING</scope>
    <source>
        <strain>LVPib12</strain>
    </source>
</reference>
<sequence length="254" mass="26852">MNQFLFVSFCALLGLSQVSAATLSSGRIVGGFQIDIAEVPHQVSLQRSGRHFCGGSIISPRWVLTAAHCTTNTDPAAYTIRAGSTDRTNGGIIVKVKSVIPHPQYNGDTYNYDFSLLELDESIGFSRSIEAIALPEASETVADGAMCTVSGWGDTKNVFEMNTLLRAVNVPSYNQAECAAALVNVVPVTEQMICAGYAAGGKDSCQGDSGGPLVSGDKLVGVVSWGKGCALPNLPGVYARVSTVRQWIREVSEV</sequence>
<keyword id="KW-0025">Alternative splicing</keyword>
<keyword id="KW-0222">Digestion</keyword>
<keyword id="KW-1015">Disulfide bond</keyword>
<keyword id="KW-0378">Hydrolase</keyword>
<keyword id="KW-0645">Protease</keyword>
<keyword id="KW-1185">Reference proteome</keyword>
<keyword id="KW-0964">Secreted</keyword>
<keyword id="KW-0720">Serine protease</keyword>
<keyword id="KW-0732">Signal</keyword>
<keyword id="KW-0865">Zymogen</keyword>
<comment type="function">
    <text evidence="4">Major function may be to aid in digestion of the blood meal.</text>
</comment>
<comment type="catalytic activity">
    <reaction>
        <text>Preferential cleavage: Arg-|-Xaa, Lys-|-Xaa.</text>
        <dbReference type="EC" id="3.4.21.4"/>
    </reaction>
</comment>
<comment type="subcellular location">
    <subcellularLocation>
        <location evidence="4">Secreted</location>
        <location evidence="4">Extracellular space</location>
    </subcellularLocation>
</comment>
<comment type="alternative products">
    <event type="alternative splicing"/>
    <isoform>
        <id>P29786-1</id>
        <name>B</name>
        <sequence type="displayed"/>
    </isoform>
    <isoform>
        <id>P29786-2</id>
        <name>A</name>
        <sequence type="described" ref="VSP_035031"/>
    </isoform>
</comment>
<comment type="tissue specificity">
    <text evidence="4">Midgut.</text>
</comment>
<comment type="induction">
    <text evidence="4">By blood feed.</text>
</comment>
<comment type="similarity">
    <text evidence="3">Belongs to the peptidase S1 family.</text>
</comment>
<name>TRY3_AEDAE</name>
<gene>
    <name type="ORF">AAEL007818</name>
</gene>